<keyword id="KW-0238">DNA-binding</keyword>
<keyword id="KW-1185">Reference proteome</keyword>
<evidence type="ECO:0000255" key="1">
    <source>
        <dbReference type="HAMAP-Rule" id="MF_00026"/>
    </source>
</evidence>
<evidence type="ECO:0000256" key="2">
    <source>
        <dbReference type="SAM" id="MobiDB-lite"/>
    </source>
</evidence>
<gene>
    <name type="ordered locus">VNG_2008H</name>
</gene>
<comment type="similarity">
    <text evidence="1">Belongs to the PDCD5 family.</text>
</comment>
<protein>
    <recommendedName>
        <fullName evidence="1">DNA-binding protein VNG_2008H</fullName>
    </recommendedName>
</protein>
<organism>
    <name type="scientific">Halobacterium salinarum (strain ATCC 700922 / JCM 11081 / NRC-1)</name>
    <name type="common">Halobacterium halobium</name>
    <dbReference type="NCBI Taxonomy" id="64091"/>
    <lineage>
        <taxon>Archaea</taxon>
        <taxon>Methanobacteriati</taxon>
        <taxon>Methanobacteriota</taxon>
        <taxon>Stenosarchaea group</taxon>
        <taxon>Halobacteria</taxon>
        <taxon>Halobacteriales</taxon>
        <taxon>Halobacteriaceae</taxon>
        <taxon>Halobacterium</taxon>
        <taxon>Halobacterium salinarum NRC-34001</taxon>
    </lineage>
</organism>
<dbReference type="EMBL" id="AE004437">
    <property type="protein sequence ID" value="AAG20177.1"/>
    <property type="molecule type" value="Genomic_DNA"/>
</dbReference>
<dbReference type="PIR" id="E84351">
    <property type="entry name" value="E84351"/>
</dbReference>
<dbReference type="RefSeq" id="WP_010903478.1">
    <property type="nucleotide sequence ID" value="NC_002607.1"/>
</dbReference>
<dbReference type="SMR" id="Q9HNP3"/>
<dbReference type="FunCoup" id="Q9HNP3">
    <property type="interactions" value="83"/>
</dbReference>
<dbReference type="STRING" id="64091.VNG_2008H"/>
<dbReference type="PaxDb" id="64091-VNG_2008H"/>
<dbReference type="KEGG" id="hal:VNG_2008H"/>
<dbReference type="PATRIC" id="fig|64091.14.peg.1534"/>
<dbReference type="HOGENOM" id="CLU_122978_3_0_2"/>
<dbReference type="InParanoid" id="Q9HNP3"/>
<dbReference type="OrthoDB" id="7912at2157"/>
<dbReference type="Proteomes" id="UP000000554">
    <property type="component" value="Chromosome"/>
</dbReference>
<dbReference type="GO" id="GO:0005829">
    <property type="term" value="C:cytosol"/>
    <property type="evidence" value="ECO:0000318"/>
    <property type="project" value="GO_Central"/>
</dbReference>
<dbReference type="GO" id="GO:0003677">
    <property type="term" value="F:DNA binding"/>
    <property type="evidence" value="ECO:0007669"/>
    <property type="project" value="UniProtKB-UniRule"/>
</dbReference>
<dbReference type="Gene3D" id="1.10.8.140">
    <property type="entry name" value="PDCD5-like"/>
    <property type="match status" value="1"/>
</dbReference>
<dbReference type="HAMAP" id="MF_00026">
    <property type="entry name" value="dsDNA_bind"/>
    <property type="match status" value="1"/>
</dbReference>
<dbReference type="InterPro" id="IPR022889">
    <property type="entry name" value="DNA_bind_arc"/>
</dbReference>
<dbReference type="InterPro" id="IPR002836">
    <property type="entry name" value="PDCD5-like"/>
</dbReference>
<dbReference type="InterPro" id="IPR036883">
    <property type="entry name" value="PDCD5-like_sf"/>
</dbReference>
<dbReference type="NCBIfam" id="NF003268">
    <property type="entry name" value="PRK04239.1"/>
    <property type="match status" value="1"/>
</dbReference>
<dbReference type="PANTHER" id="PTHR10840">
    <property type="entry name" value="PROGRAMMED CELL DEATH PROTEIN 5"/>
    <property type="match status" value="1"/>
</dbReference>
<dbReference type="PANTHER" id="PTHR10840:SF0">
    <property type="entry name" value="PROGRAMMED CELL DEATH PROTEIN 5"/>
    <property type="match status" value="1"/>
</dbReference>
<dbReference type="Pfam" id="PF01984">
    <property type="entry name" value="dsDNA_bind"/>
    <property type="match status" value="1"/>
</dbReference>
<dbReference type="PIRSF" id="PIRSF015730">
    <property type="entry name" value="TFAR19"/>
    <property type="match status" value="1"/>
</dbReference>
<dbReference type="SUPFAM" id="SSF46950">
    <property type="entry name" value="Double-stranded DNA-binding domain"/>
    <property type="match status" value="1"/>
</dbReference>
<sequence>MSGNPDDDRLEELRQRKKEQLKQQQQGGDAEREAQQQQAQQAEQQKQAMLKQNLTDGARKRLNTIRMSKPEFAEQAEQQVLALAQSGRVQGRIDEDQMKEILRELKPDSQSFNINRR</sequence>
<name>Y2008_HALSA</name>
<reference key="1">
    <citation type="journal article" date="2000" name="Proc. Natl. Acad. Sci. U.S.A.">
        <title>Genome sequence of Halobacterium species NRC-1.</title>
        <authorList>
            <person name="Ng W.V."/>
            <person name="Kennedy S.P."/>
            <person name="Mahairas G.G."/>
            <person name="Berquist B."/>
            <person name="Pan M."/>
            <person name="Shukla H.D."/>
            <person name="Lasky S.R."/>
            <person name="Baliga N.S."/>
            <person name="Thorsson V."/>
            <person name="Sbrogna J."/>
            <person name="Swartzell S."/>
            <person name="Weir D."/>
            <person name="Hall J."/>
            <person name="Dahl T.A."/>
            <person name="Welti R."/>
            <person name="Goo Y.A."/>
            <person name="Leithauser B."/>
            <person name="Keller K."/>
            <person name="Cruz R."/>
            <person name="Danson M.J."/>
            <person name="Hough D.W."/>
            <person name="Maddocks D.G."/>
            <person name="Jablonski P.E."/>
            <person name="Krebs M.P."/>
            <person name="Angevine C.M."/>
            <person name="Dale H."/>
            <person name="Isenbarger T.A."/>
            <person name="Peck R.F."/>
            <person name="Pohlschroder M."/>
            <person name="Spudich J.L."/>
            <person name="Jung K.-H."/>
            <person name="Alam M."/>
            <person name="Freitas T."/>
            <person name="Hou S."/>
            <person name="Daniels C.J."/>
            <person name="Dennis P.P."/>
            <person name="Omer A.D."/>
            <person name="Ebhardt H."/>
            <person name="Lowe T.M."/>
            <person name="Liang P."/>
            <person name="Riley M."/>
            <person name="Hood L."/>
            <person name="DasSarma S."/>
        </authorList>
    </citation>
    <scope>NUCLEOTIDE SEQUENCE [LARGE SCALE GENOMIC DNA]</scope>
    <source>
        <strain>ATCC 700922 / JCM 11081 / NRC-1</strain>
    </source>
</reference>
<proteinExistence type="inferred from homology"/>
<accession>Q9HNP3</accession>
<feature type="chain" id="PRO_0000121553" description="DNA-binding protein VNG_2008H">
    <location>
        <begin position="1"/>
        <end position="117"/>
    </location>
</feature>
<feature type="region of interest" description="Disordered" evidence="2">
    <location>
        <begin position="1"/>
        <end position="59"/>
    </location>
</feature>
<feature type="compositionally biased region" description="Basic and acidic residues" evidence="2">
    <location>
        <begin position="11"/>
        <end position="21"/>
    </location>
</feature>
<feature type="compositionally biased region" description="Low complexity" evidence="2">
    <location>
        <begin position="35"/>
        <end position="48"/>
    </location>
</feature>